<reference key="1">
    <citation type="journal article" date="2003" name="Nucleic Acids Res.">
        <title>The complete nucleotide sequence of the hornwort (Anthoceros formosae) chloroplast genome: insight into the earliest land plants.</title>
        <authorList>
            <person name="Kugita M."/>
            <person name="Kaneko A."/>
            <person name="Yamamoto Y."/>
            <person name="Takeya Y."/>
            <person name="Matsumoto T."/>
            <person name="Yoshinaga K."/>
        </authorList>
    </citation>
    <scope>NUCLEOTIDE SEQUENCE [LARGE SCALE GENOMIC DNA]</scope>
    <scope>RNA EDITING</scope>
</reference>
<reference key="2">
    <citation type="journal article" date="2003" name="Nucleic Acids Res.">
        <title>RNA editing in hornwort chloroplasts makes more than half the genes functional.</title>
        <authorList>
            <person name="Kugita M."/>
            <person name="Yamamoto Y."/>
            <person name="Fujikawa T."/>
            <person name="Matsumoto T."/>
            <person name="Yoshinaga K."/>
        </authorList>
    </citation>
    <scope>NUCLEOTIDE SEQUENCE [MRNA]</scope>
    <scope>RNA EDITING</scope>
    <source>
        <tissue>Thallus</tissue>
    </source>
</reference>
<protein>
    <recommendedName>
        <fullName evidence="1">Sulfate/thiosulfate import ATP-binding protein CysA</fullName>
        <ecNumber evidence="1">7.3.2.3</ecNumber>
    </recommendedName>
    <alternativeName>
        <fullName evidence="1">Sulfate-transporting ATPase</fullName>
    </alternativeName>
</protein>
<comment type="function">
    <text evidence="1">Part of the ABC transporter complex involved in sulfate/thiosulfate import. Responsible for energy coupling to the transport system.</text>
</comment>
<comment type="catalytic activity">
    <reaction evidence="1">
        <text>sulfate(out) + ATP + H2O = sulfate(in) + ADP + phosphate + H(+)</text>
        <dbReference type="Rhea" id="RHEA:10192"/>
        <dbReference type="ChEBI" id="CHEBI:15377"/>
        <dbReference type="ChEBI" id="CHEBI:15378"/>
        <dbReference type="ChEBI" id="CHEBI:16189"/>
        <dbReference type="ChEBI" id="CHEBI:30616"/>
        <dbReference type="ChEBI" id="CHEBI:43474"/>
        <dbReference type="ChEBI" id="CHEBI:456216"/>
        <dbReference type="EC" id="7.3.2.3"/>
    </reaction>
</comment>
<comment type="catalytic activity">
    <reaction evidence="1">
        <text>thiosulfate(out) + ATP + H2O = thiosulfate(in) + ADP + phosphate + H(+)</text>
        <dbReference type="Rhea" id="RHEA:29871"/>
        <dbReference type="ChEBI" id="CHEBI:15377"/>
        <dbReference type="ChEBI" id="CHEBI:15378"/>
        <dbReference type="ChEBI" id="CHEBI:30616"/>
        <dbReference type="ChEBI" id="CHEBI:33542"/>
        <dbReference type="ChEBI" id="CHEBI:43474"/>
        <dbReference type="ChEBI" id="CHEBI:456216"/>
        <dbReference type="EC" id="7.3.2.3"/>
    </reaction>
</comment>
<comment type="subcellular location">
    <subcellularLocation>
        <location>Plastid</location>
        <location>Chloroplast</location>
    </subcellularLocation>
</comment>
<comment type="RNA editing">
    <location>
        <position position="1" evidence="2 3"/>
    </location>
    <location>
        <position position="4" evidence="2 3"/>
    </location>
    <location>
        <position position="18" evidence="2 3"/>
    </location>
    <location>
        <position position="33" evidence="2 3"/>
    </location>
    <location>
        <position position="34" evidence="2 3"/>
    </location>
    <location>
        <position position="72" evidence="2 3"/>
    </location>
    <location>
        <position position="80" evidence="2 3"/>
    </location>
    <location>
        <position position="86" evidence="2 3"/>
    </location>
    <location>
        <position position="95" evidence="2 3"/>
    </location>
    <location>
        <position position="121" evidence="2 3"/>
    </location>
    <location>
        <position position="123" evidence="2 3"/>
    </location>
    <location>
        <position position="154" evidence="2 3"/>
    </location>
    <location>
        <position position="155" evidence="2 3"/>
    </location>
    <location>
        <position position="156" evidence="2 3"/>
    </location>
    <location>
        <position position="163" evidence="2 3"/>
    </location>
    <location>
        <position position="169" evidence="2 3"/>
    </location>
    <location>
        <position position="193" evidence="2 3"/>
    </location>
    <location>
        <position position="196" evidence="2 3"/>
    </location>
    <location>
        <position position="233" evidence="2 3"/>
    </location>
    <location>
        <position position="295" evidence="2 3"/>
    </location>
    <location>
        <position position="346" evidence="2 3"/>
    </location>
    <text>The initiator methionine is created by RNA editing. The nonsense codons at positions 72, 121, 169, 193 and 346 are modified to sense codons.</text>
</comment>
<comment type="similarity">
    <text evidence="1">Belongs to the ABC transporter superfamily. Sulfate/tungstate importer (TC 3.A.1.6) family.</text>
</comment>
<keyword id="KW-0067">ATP-binding</keyword>
<keyword id="KW-0150">Chloroplast</keyword>
<keyword id="KW-0547">Nucleotide-binding</keyword>
<keyword id="KW-0934">Plastid</keyword>
<keyword id="KW-0691">RNA editing</keyword>
<keyword id="KW-0764">Sulfate transport</keyword>
<keyword id="KW-1278">Translocase</keyword>
<keyword id="KW-0813">Transport</keyword>
<geneLocation type="chloroplast"/>
<dbReference type="EC" id="7.3.2.3" evidence="1"/>
<dbReference type="EMBL" id="AB086179">
    <property type="protein sequence ID" value="BAC55343.1"/>
    <property type="molecule type" value="Genomic_DNA"/>
</dbReference>
<dbReference type="EMBL" id="AB087436">
    <property type="protein sequence ID" value="BAC55436.1"/>
    <property type="molecule type" value="mRNA"/>
</dbReference>
<dbReference type="RefSeq" id="NP_777407.1">
    <property type="nucleotide sequence ID" value="NC_004543.1"/>
</dbReference>
<dbReference type="SMR" id="Q85A69"/>
<dbReference type="GeneID" id="2553491"/>
<dbReference type="GO" id="GO:0009507">
    <property type="term" value="C:chloroplast"/>
    <property type="evidence" value="ECO:0007669"/>
    <property type="project" value="UniProtKB-SubCell"/>
</dbReference>
<dbReference type="GO" id="GO:0015419">
    <property type="term" value="F:ABC-type sulfate transporter activity"/>
    <property type="evidence" value="ECO:0007669"/>
    <property type="project" value="RHEA"/>
</dbReference>
<dbReference type="GO" id="GO:0102025">
    <property type="term" value="F:ABC-type thiosulfate transporter activity"/>
    <property type="evidence" value="ECO:0007669"/>
    <property type="project" value="RHEA"/>
</dbReference>
<dbReference type="GO" id="GO:0005524">
    <property type="term" value="F:ATP binding"/>
    <property type="evidence" value="ECO:0007669"/>
    <property type="project" value="UniProtKB-KW"/>
</dbReference>
<dbReference type="GO" id="GO:0016887">
    <property type="term" value="F:ATP hydrolysis activity"/>
    <property type="evidence" value="ECO:0007669"/>
    <property type="project" value="InterPro"/>
</dbReference>
<dbReference type="FunFam" id="3.40.50.300:FF:000425">
    <property type="entry name" value="Probable ABC transporter, ATP-binding subunit"/>
    <property type="match status" value="1"/>
</dbReference>
<dbReference type="Gene3D" id="3.40.50.300">
    <property type="entry name" value="P-loop containing nucleotide triphosphate hydrolases"/>
    <property type="match status" value="1"/>
</dbReference>
<dbReference type="InterPro" id="IPR003593">
    <property type="entry name" value="AAA+_ATPase"/>
</dbReference>
<dbReference type="InterPro" id="IPR050093">
    <property type="entry name" value="ABC_SmlMolc_Importer"/>
</dbReference>
<dbReference type="InterPro" id="IPR003439">
    <property type="entry name" value="ABC_transporter-like_ATP-bd"/>
</dbReference>
<dbReference type="InterPro" id="IPR017871">
    <property type="entry name" value="ABC_transporter-like_CS"/>
</dbReference>
<dbReference type="InterPro" id="IPR027417">
    <property type="entry name" value="P-loop_NTPase"/>
</dbReference>
<dbReference type="PANTHER" id="PTHR42781">
    <property type="entry name" value="SPERMIDINE/PUTRESCINE IMPORT ATP-BINDING PROTEIN POTA"/>
    <property type="match status" value="1"/>
</dbReference>
<dbReference type="PANTHER" id="PTHR42781:SF4">
    <property type="entry name" value="SPERMIDINE_PUTRESCINE IMPORT ATP-BINDING PROTEIN POTA"/>
    <property type="match status" value="1"/>
</dbReference>
<dbReference type="Pfam" id="PF00005">
    <property type="entry name" value="ABC_tran"/>
    <property type="match status" value="1"/>
</dbReference>
<dbReference type="SMART" id="SM00382">
    <property type="entry name" value="AAA"/>
    <property type="match status" value="1"/>
</dbReference>
<dbReference type="SUPFAM" id="SSF52540">
    <property type="entry name" value="P-loop containing nucleoside triphosphate hydrolases"/>
    <property type="match status" value="1"/>
</dbReference>
<dbReference type="PROSITE" id="PS00211">
    <property type="entry name" value="ABC_TRANSPORTER_1"/>
    <property type="match status" value="1"/>
</dbReference>
<dbReference type="PROSITE" id="PS50893">
    <property type="entry name" value="ABC_TRANSPORTER_2"/>
    <property type="match status" value="1"/>
</dbReference>
<dbReference type="PROSITE" id="PS51237">
    <property type="entry name" value="CYSA"/>
    <property type="match status" value="1"/>
</dbReference>
<evidence type="ECO:0000255" key="1">
    <source>
        <dbReference type="HAMAP-Rule" id="MF_01701"/>
    </source>
</evidence>
<evidence type="ECO:0000269" key="2">
    <source>
    </source>
</evidence>
<evidence type="ECO:0000269" key="3">
    <source>
    </source>
</evidence>
<accession>Q85A69</accession>
<proteinExistence type="evidence at transcript level"/>
<name>CYSA_ANTAG</name>
<sequence length="381" mass="43655">MSILVYEVSKSLGNLKVLDRVSLYVRKVSLVALLGPSGSGKSSLLRIIAGLDSPDYGSVWLHGTDMTNTSTQYRHMAFVFQHYALFKNMTVYENISFGLRLRGFSYQKIRNKVNDLLDCLRISDIVSEYPGKLSGGQKQRVALARSLAIKSDFLLLDEPFGALDGELRRHLSKWLKRYLKDNGITTIMVTHDQKEAISMADEIVVLKQGRFLQQGRSKNLYDEPIDYFVGIFSGSFIEFPQLEESLDAPLGSSSSSSSSTKKSMEKDFTPFIPDLIWSQIFTNQSIHHYHFFLRPHELYLESQIDLKAIPVQIKKIIYKRTFVQLDLSITPSSWNITIPIGYQAFRKLNIQSFVQKLYIKPRNQVYLRAYPKKKNIISKQI</sequence>
<feature type="chain" id="PRO_0000092306" description="Sulfate/thiosulfate import ATP-binding protein CysA">
    <location>
        <begin position="1"/>
        <end position="381"/>
    </location>
</feature>
<feature type="domain" description="ABC transporter" evidence="1">
    <location>
        <begin position="3"/>
        <end position="233"/>
    </location>
</feature>
<feature type="binding site" evidence="1">
    <location>
        <begin position="35"/>
        <end position="42"/>
    </location>
    <ligand>
        <name>ATP</name>
        <dbReference type="ChEBI" id="CHEBI:30616"/>
    </ligand>
</feature>
<organism>
    <name type="scientific">Anthoceros angustus</name>
    <name type="common">Hornwort</name>
    <name type="synonym">Anthoceros formosae</name>
    <dbReference type="NCBI Taxonomy" id="48387"/>
    <lineage>
        <taxon>Eukaryota</taxon>
        <taxon>Viridiplantae</taxon>
        <taxon>Streptophyta</taxon>
        <taxon>Embryophyta</taxon>
        <taxon>Anthocerotophyta</taxon>
        <taxon>Anthocerotopsida</taxon>
        <taxon>Anthocerotidae</taxon>
        <taxon>Anthocerotales</taxon>
        <taxon>Anthocerotaceae</taxon>
        <taxon>Anthoceros</taxon>
    </lineage>
</organism>
<gene>
    <name evidence="1" type="primary">cysA</name>
</gene>